<accession>P52987</accession>
<comment type="function">
    <text evidence="1">Catalyzes the oxidative phosphorylation of glyceraldehyde 3-phosphate (G3P) to 1,3-bisphosphoglycerate (BPG) using the cofactor NAD. The first reaction step involves the formation of a hemiacetal intermediate between G3P and a cysteine residue, and this hemiacetal intermediate is then oxidized to a thioester, with concomitant reduction of NAD to NADH. The reduced NADH is then exchanged with the second NAD, and the thioester is attacked by a nucleophilic inorganic phosphate to produce BPG.</text>
</comment>
<comment type="catalytic activity">
    <reaction evidence="2">
        <text>D-glyceraldehyde 3-phosphate + phosphate + NAD(+) = (2R)-3-phospho-glyceroyl phosphate + NADH + H(+)</text>
        <dbReference type="Rhea" id="RHEA:10300"/>
        <dbReference type="ChEBI" id="CHEBI:15378"/>
        <dbReference type="ChEBI" id="CHEBI:43474"/>
        <dbReference type="ChEBI" id="CHEBI:57540"/>
        <dbReference type="ChEBI" id="CHEBI:57604"/>
        <dbReference type="ChEBI" id="CHEBI:57945"/>
        <dbReference type="ChEBI" id="CHEBI:59776"/>
        <dbReference type="EC" id="1.2.1.12"/>
    </reaction>
</comment>
<comment type="pathway">
    <text evidence="4">Carbohydrate degradation; glycolysis; pyruvate from D-glyceraldehyde 3-phosphate: step 1/5.</text>
</comment>
<comment type="subunit">
    <text evidence="1">Homotetramer.</text>
</comment>
<comment type="subcellular location">
    <subcellularLocation>
        <location evidence="4">Cytoplasm</location>
    </subcellularLocation>
</comment>
<comment type="similarity">
    <text evidence="4">Belongs to the glyceraldehyde-3-phosphate dehydrogenase family.</text>
</comment>
<reference key="1">
    <citation type="journal article" date="1995" name="Microbiology">
        <title>Lactococcus lactis glyceraldehyde-3-phosphate dehydrogenase gene, gap: further evidence for strongly biased codon usage in glycolytic pathway genes.</title>
        <authorList>
            <person name="Cancilla M.R."/>
            <person name="Hillier A.J."/>
            <person name="Davidson B.E."/>
        </authorList>
    </citation>
    <scope>NUCLEOTIDE SEQUENCE [GENOMIC DNA]</scope>
    <source>
        <strain>LM0230</strain>
    </source>
</reference>
<reference key="2">
    <citation type="journal article" date="2001" name="Genome Res.">
        <title>The complete genome sequence of the lactic acid bacterium Lactococcus lactis ssp. lactis IL1403.</title>
        <authorList>
            <person name="Bolotin A."/>
            <person name="Wincker P."/>
            <person name="Mauger S."/>
            <person name="Jaillon O."/>
            <person name="Malarme K."/>
            <person name="Weissenbach J."/>
            <person name="Ehrlich S.D."/>
            <person name="Sorokin A."/>
        </authorList>
    </citation>
    <scope>NUCLEOTIDE SEQUENCE [LARGE SCALE GENOMIC DNA]</scope>
    <source>
        <strain>IL1403</strain>
    </source>
</reference>
<feature type="chain" id="PRO_0000145666" description="Glyceraldehyde-3-phosphate dehydrogenase">
    <location>
        <begin position="1"/>
        <end position="337"/>
    </location>
</feature>
<feature type="active site" description="Nucleophile" evidence="1">
    <location>
        <position position="152"/>
    </location>
</feature>
<feature type="binding site" evidence="1">
    <location>
        <begin position="12"/>
        <end position="13"/>
    </location>
    <ligand>
        <name>NAD(+)</name>
        <dbReference type="ChEBI" id="CHEBI:57540"/>
    </ligand>
</feature>
<feature type="binding site" evidence="1">
    <location>
        <position position="34"/>
    </location>
    <ligand>
        <name>NAD(+)</name>
        <dbReference type="ChEBI" id="CHEBI:57540"/>
    </ligand>
</feature>
<feature type="binding site" evidence="1">
    <location>
        <position position="78"/>
    </location>
    <ligand>
        <name>NAD(+)</name>
        <dbReference type="ChEBI" id="CHEBI:57540"/>
    </ligand>
</feature>
<feature type="binding site" evidence="1">
    <location>
        <position position="121"/>
    </location>
    <ligand>
        <name>NAD(+)</name>
        <dbReference type="ChEBI" id="CHEBI:57540"/>
    </ligand>
</feature>
<feature type="binding site" evidence="1">
    <location>
        <begin position="151"/>
        <end position="153"/>
    </location>
    <ligand>
        <name>D-glyceraldehyde 3-phosphate</name>
        <dbReference type="ChEBI" id="CHEBI:59776"/>
    </ligand>
</feature>
<feature type="binding site" evidence="1">
    <location>
        <position position="182"/>
    </location>
    <ligand>
        <name>D-glyceraldehyde 3-phosphate</name>
        <dbReference type="ChEBI" id="CHEBI:59776"/>
    </ligand>
</feature>
<feature type="binding site" evidence="1">
    <location>
        <position position="199"/>
    </location>
    <ligand>
        <name>D-glyceraldehyde 3-phosphate</name>
        <dbReference type="ChEBI" id="CHEBI:59776"/>
    </ligand>
</feature>
<feature type="binding site" evidence="1">
    <location>
        <begin position="212"/>
        <end position="213"/>
    </location>
    <ligand>
        <name>D-glyceraldehyde 3-phosphate</name>
        <dbReference type="ChEBI" id="CHEBI:59776"/>
    </ligand>
</feature>
<feature type="binding site" evidence="1">
    <location>
        <position position="235"/>
    </location>
    <ligand>
        <name>D-glyceraldehyde 3-phosphate</name>
        <dbReference type="ChEBI" id="CHEBI:59776"/>
    </ligand>
</feature>
<feature type="binding site" evidence="1">
    <location>
        <position position="317"/>
    </location>
    <ligand>
        <name>NAD(+)</name>
        <dbReference type="ChEBI" id="CHEBI:57540"/>
    </ligand>
</feature>
<feature type="site" description="Activates thiol group during catalysis" evidence="3">
    <location>
        <position position="179"/>
    </location>
</feature>
<feature type="sequence conflict" description="In Ref. 1; AAC41453." evidence="4" ref="1">
    <original>T</original>
    <variation>S</variation>
    <location>
        <position position="143"/>
    </location>
</feature>
<proteinExistence type="inferred from homology"/>
<evidence type="ECO:0000250" key="1">
    <source>
        <dbReference type="UniProtKB" id="P00362"/>
    </source>
</evidence>
<evidence type="ECO:0000250" key="2">
    <source>
        <dbReference type="UniProtKB" id="P09124"/>
    </source>
</evidence>
<evidence type="ECO:0000250" key="3">
    <source>
        <dbReference type="UniProtKB" id="Q6GIL8"/>
    </source>
</evidence>
<evidence type="ECO:0000305" key="4"/>
<protein>
    <recommendedName>
        <fullName evidence="1">Glyceraldehyde-3-phosphate dehydrogenase</fullName>
        <shortName evidence="1">GAPDH</shortName>
        <ecNumber evidence="2">1.2.1.12</ecNumber>
    </recommendedName>
    <alternativeName>
        <fullName evidence="1">NAD-dependent glyceraldehyde-3-phosphate dehydrogenase</fullName>
    </alternativeName>
</protein>
<sequence>MVVKVGINGFGRIGRLALRRIQEVEGVEVAHINDLTDPAMLAHLLKYDTTQGRFKGTVEVKEDGFDVNGKFVKVTAERNPEDIQWADSGVEIVLEATGFFATKEKAEKHLHPGGAKKVLITAPGGNDVKTVVFNTNHTILDGTETVISAGSCTTNSLAPMADALNKNFGVKGGTMTTVHSYTGDQMTLDGPHRGGDFRRARAAAENIVPASSGAAKAIGLVLPELSGLMKGHAQRVSTPTGSITELVTVLEKHVTVDEINEAMKAAADESFGYNVDEIVSSDIIGMAYGSLFDATLTEVTDLKDGGQLVKTAAWYDNEMSFTAQLIRTLEYFAKIAK</sequence>
<organism>
    <name type="scientific">Lactococcus lactis subsp. lactis (strain IL1403)</name>
    <name type="common">Streptococcus lactis</name>
    <dbReference type="NCBI Taxonomy" id="272623"/>
    <lineage>
        <taxon>Bacteria</taxon>
        <taxon>Bacillati</taxon>
        <taxon>Bacillota</taxon>
        <taxon>Bacilli</taxon>
        <taxon>Lactobacillales</taxon>
        <taxon>Streptococcaceae</taxon>
        <taxon>Lactococcus</taxon>
    </lineage>
</organism>
<keyword id="KW-0963">Cytoplasm</keyword>
<keyword id="KW-0324">Glycolysis</keyword>
<keyword id="KW-0520">NAD</keyword>
<keyword id="KW-0547">Nucleotide-binding</keyword>
<keyword id="KW-0560">Oxidoreductase</keyword>
<keyword id="KW-1185">Reference proteome</keyword>
<name>G3P_LACLA</name>
<gene>
    <name type="primary">gap</name>
    <name type="ordered locus">LL0559</name>
    <name type="ORF">L0004</name>
</gene>
<dbReference type="EC" id="1.2.1.12" evidence="2"/>
<dbReference type="EMBL" id="L36907">
    <property type="protein sequence ID" value="AAC41453.1"/>
    <property type="molecule type" value="Genomic_DNA"/>
</dbReference>
<dbReference type="EMBL" id="AE005176">
    <property type="protein sequence ID" value="AAK04657.1"/>
    <property type="molecule type" value="Genomic_DNA"/>
</dbReference>
<dbReference type="PIR" id="G86694">
    <property type="entry name" value="G86694"/>
</dbReference>
<dbReference type="RefSeq" id="NP_266715.1">
    <property type="nucleotide sequence ID" value="NC_002662.1"/>
</dbReference>
<dbReference type="RefSeq" id="WP_003130818.1">
    <property type="nucleotide sequence ID" value="NC_002662.1"/>
</dbReference>
<dbReference type="SMR" id="P52987"/>
<dbReference type="MoonProt" id="P52987"/>
<dbReference type="PaxDb" id="272623-L0004"/>
<dbReference type="EnsemblBacteria" id="AAK04657">
    <property type="protein sequence ID" value="AAK04657"/>
    <property type="gene ID" value="L0004"/>
</dbReference>
<dbReference type="GeneID" id="89632678"/>
<dbReference type="KEGG" id="lla:L0004"/>
<dbReference type="PATRIC" id="fig|272623.7.peg.597"/>
<dbReference type="eggNOG" id="COG0057">
    <property type="taxonomic scope" value="Bacteria"/>
</dbReference>
<dbReference type="HOGENOM" id="CLU_030140_0_0_9"/>
<dbReference type="OrthoDB" id="9803304at2"/>
<dbReference type="SABIO-RK" id="P52987"/>
<dbReference type="UniPathway" id="UPA00109">
    <property type="reaction ID" value="UER00184"/>
</dbReference>
<dbReference type="Proteomes" id="UP000002196">
    <property type="component" value="Chromosome"/>
</dbReference>
<dbReference type="GO" id="GO:0009986">
    <property type="term" value="C:cell surface"/>
    <property type="evidence" value="ECO:0000314"/>
    <property type="project" value="CAFA"/>
</dbReference>
<dbReference type="GO" id="GO:0005737">
    <property type="term" value="C:cytoplasm"/>
    <property type="evidence" value="ECO:0007669"/>
    <property type="project" value="UniProtKB-SubCell"/>
</dbReference>
<dbReference type="GO" id="GO:0004365">
    <property type="term" value="F:glyceraldehyde-3-phosphate dehydrogenase (NAD+) (phosphorylating) activity"/>
    <property type="evidence" value="ECO:0000250"/>
    <property type="project" value="UniProtKB"/>
</dbReference>
<dbReference type="GO" id="GO:2001065">
    <property type="term" value="F:mannan binding"/>
    <property type="evidence" value="ECO:0000314"/>
    <property type="project" value="CAFA"/>
</dbReference>
<dbReference type="GO" id="GO:0051287">
    <property type="term" value="F:NAD binding"/>
    <property type="evidence" value="ECO:0000250"/>
    <property type="project" value="UniProtKB"/>
</dbReference>
<dbReference type="GO" id="GO:0050661">
    <property type="term" value="F:NADP binding"/>
    <property type="evidence" value="ECO:0007669"/>
    <property type="project" value="InterPro"/>
</dbReference>
<dbReference type="GO" id="GO:0006006">
    <property type="term" value="P:glucose metabolic process"/>
    <property type="evidence" value="ECO:0007669"/>
    <property type="project" value="InterPro"/>
</dbReference>
<dbReference type="GO" id="GO:0006096">
    <property type="term" value="P:glycolytic process"/>
    <property type="evidence" value="ECO:0007669"/>
    <property type="project" value="UniProtKB-UniPathway"/>
</dbReference>
<dbReference type="CDD" id="cd18126">
    <property type="entry name" value="GAPDH_I_C"/>
    <property type="match status" value="1"/>
</dbReference>
<dbReference type="CDD" id="cd05214">
    <property type="entry name" value="GAPDH_I_N"/>
    <property type="match status" value="1"/>
</dbReference>
<dbReference type="FunFam" id="3.30.360.10:FF:000002">
    <property type="entry name" value="Glyceraldehyde-3-phosphate dehydrogenase"/>
    <property type="match status" value="1"/>
</dbReference>
<dbReference type="FunFam" id="3.40.50.720:FF:000001">
    <property type="entry name" value="Glyceraldehyde-3-phosphate dehydrogenase"/>
    <property type="match status" value="1"/>
</dbReference>
<dbReference type="Gene3D" id="3.30.360.10">
    <property type="entry name" value="Dihydrodipicolinate Reductase, domain 2"/>
    <property type="match status" value="1"/>
</dbReference>
<dbReference type="Gene3D" id="3.40.50.720">
    <property type="entry name" value="NAD(P)-binding Rossmann-like Domain"/>
    <property type="match status" value="1"/>
</dbReference>
<dbReference type="InterPro" id="IPR020831">
    <property type="entry name" value="GlycerAld/Erythrose_P_DH"/>
</dbReference>
<dbReference type="InterPro" id="IPR020829">
    <property type="entry name" value="GlycerAld_3-P_DH_cat"/>
</dbReference>
<dbReference type="InterPro" id="IPR020828">
    <property type="entry name" value="GlycerAld_3-P_DH_NAD(P)-bd"/>
</dbReference>
<dbReference type="InterPro" id="IPR006424">
    <property type="entry name" value="Glyceraldehyde-3-P_DH_1"/>
</dbReference>
<dbReference type="InterPro" id="IPR036291">
    <property type="entry name" value="NAD(P)-bd_dom_sf"/>
</dbReference>
<dbReference type="NCBIfam" id="TIGR01534">
    <property type="entry name" value="GAPDH-I"/>
    <property type="match status" value="1"/>
</dbReference>
<dbReference type="PANTHER" id="PTHR43148">
    <property type="entry name" value="GLYCERALDEHYDE-3-PHOSPHATE DEHYDROGENASE 2"/>
    <property type="match status" value="1"/>
</dbReference>
<dbReference type="Pfam" id="PF02800">
    <property type="entry name" value="Gp_dh_C"/>
    <property type="match status" value="1"/>
</dbReference>
<dbReference type="Pfam" id="PF00044">
    <property type="entry name" value="Gp_dh_N"/>
    <property type="match status" value="1"/>
</dbReference>
<dbReference type="PIRSF" id="PIRSF000149">
    <property type="entry name" value="GAP_DH"/>
    <property type="match status" value="1"/>
</dbReference>
<dbReference type="PRINTS" id="PR00078">
    <property type="entry name" value="G3PDHDRGNASE"/>
</dbReference>
<dbReference type="SMART" id="SM00846">
    <property type="entry name" value="Gp_dh_N"/>
    <property type="match status" value="1"/>
</dbReference>
<dbReference type="SUPFAM" id="SSF55347">
    <property type="entry name" value="Glyceraldehyde-3-phosphate dehydrogenase-like, C-terminal domain"/>
    <property type="match status" value="1"/>
</dbReference>
<dbReference type="SUPFAM" id="SSF51735">
    <property type="entry name" value="NAD(P)-binding Rossmann-fold domains"/>
    <property type="match status" value="1"/>
</dbReference>